<evidence type="ECO:0000255" key="1"/>
<evidence type="ECO:0000256" key="2">
    <source>
        <dbReference type="SAM" id="MobiDB-lite"/>
    </source>
</evidence>
<evidence type="ECO:0000305" key="3"/>
<accession>Q2YWC8</accession>
<gene>
    <name type="ordered locus">SAB2455</name>
</gene>
<feature type="chain" id="PRO_0000298609" description="Uncharacterized hydrolase SAB2455">
    <location>
        <begin position="1"/>
        <end position="276"/>
    </location>
</feature>
<feature type="domain" description="AB hydrolase-1" evidence="1">
    <location>
        <begin position="20"/>
        <end position="137"/>
    </location>
</feature>
<feature type="region of interest" description="Disordered" evidence="2">
    <location>
        <begin position="57"/>
        <end position="76"/>
    </location>
</feature>
<reference key="1">
    <citation type="journal article" date="2007" name="PLoS ONE">
        <title>Molecular correlates of host specialization in Staphylococcus aureus.</title>
        <authorList>
            <person name="Herron-Olson L."/>
            <person name="Fitzgerald J.R."/>
            <person name="Musser J.M."/>
            <person name="Kapur V."/>
        </authorList>
    </citation>
    <scope>NUCLEOTIDE SEQUENCE [LARGE SCALE GENOMIC DNA]</scope>
    <source>
        <strain>bovine RF122 / ET3-1</strain>
    </source>
</reference>
<keyword id="KW-0378">Hydrolase</keyword>
<protein>
    <recommendedName>
        <fullName>Uncharacterized hydrolase SAB2455</fullName>
        <ecNumber>3.-.-.-</ecNumber>
    </recommendedName>
</protein>
<organism>
    <name type="scientific">Staphylococcus aureus (strain bovine RF122 / ET3-1)</name>
    <dbReference type="NCBI Taxonomy" id="273036"/>
    <lineage>
        <taxon>Bacteria</taxon>
        <taxon>Bacillati</taxon>
        <taxon>Bacillota</taxon>
        <taxon>Bacilli</taxon>
        <taxon>Bacillales</taxon>
        <taxon>Staphylococcaceae</taxon>
        <taxon>Staphylococcus</taxon>
    </lineage>
</organism>
<comment type="similarity">
    <text evidence="3">Belongs to the AB hydrolase superfamily.</text>
</comment>
<proteinExistence type="inferred from homology"/>
<dbReference type="EC" id="3.-.-.-"/>
<dbReference type="EMBL" id="AJ938182">
    <property type="protein sequence ID" value="CAI82143.1"/>
    <property type="molecule type" value="Genomic_DNA"/>
</dbReference>
<dbReference type="RefSeq" id="WP_000448919.1">
    <property type="nucleotide sequence ID" value="NC_007622.1"/>
</dbReference>
<dbReference type="SMR" id="Q2YWC8"/>
<dbReference type="ESTHER" id="staau-SA2367">
    <property type="family name" value="6_AlphaBeta_hydrolase"/>
</dbReference>
<dbReference type="KEGG" id="sab:SAB2455"/>
<dbReference type="HOGENOM" id="CLU_083329_0_0_9"/>
<dbReference type="GO" id="GO:0016787">
    <property type="term" value="F:hydrolase activity"/>
    <property type="evidence" value="ECO:0007669"/>
    <property type="project" value="UniProtKB-KW"/>
</dbReference>
<dbReference type="Gene3D" id="3.40.50.1820">
    <property type="entry name" value="alpha/beta hydrolase"/>
    <property type="match status" value="1"/>
</dbReference>
<dbReference type="InterPro" id="IPR000073">
    <property type="entry name" value="AB_hydrolase_1"/>
</dbReference>
<dbReference type="InterPro" id="IPR029058">
    <property type="entry name" value="AB_hydrolase_fold"/>
</dbReference>
<dbReference type="InterPro" id="IPR050266">
    <property type="entry name" value="AB_hydrolase_sf"/>
</dbReference>
<dbReference type="PANTHER" id="PTHR43798">
    <property type="entry name" value="MONOACYLGLYCEROL LIPASE"/>
    <property type="match status" value="1"/>
</dbReference>
<dbReference type="Pfam" id="PF00561">
    <property type="entry name" value="Abhydrolase_1"/>
    <property type="match status" value="1"/>
</dbReference>
<dbReference type="SUPFAM" id="SSF53474">
    <property type="entry name" value="alpha/beta-Hydrolases"/>
    <property type="match status" value="1"/>
</dbReference>
<sequence>METLELQGAKLRYHQVGQRPVLIFIPGANGTGDIFLPLAEQLKDHFTVVAVDRRDYGESELTEPLPDSASNPDSDYRVKRDAQDIAELAKSLSDEPVYILGSSSGSIVAMHVLKDYPEVVKKIAFHEPPINTFLPDSTYWKDKNDDIVHQILTEGLEKGMKTFGETLNIAPIDAKMMSQPADTEKGRIEQYKRTMFWSEFEIRQYTHSDITLDDFTKYSDKITLLNGTDSRDSFPQDVNFYINKETGIPIVDIPGGHLGYIQKPEGFADVLLNMWG</sequence>
<name>Y2455_STAAB</name>